<gene>
    <name evidence="1" type="primary">gpsA</name>
    <name type="ordered locus">PLES_37131</name>
</gene>
<dbReference type="EC" id="1.1.1.94" evidence="1"/>
<dbReference type="EMBL" id="FM209186">
    <property type="protein sequence ID" value="CAW28440.1"/>
    <property type="molecule type" value="Genomic_DNA"/>
</dbReference>
<dbReference type="RefSeq" id="WP_003087482.1">
    <property type="nucleotide sequence ID" value="NC_011770.1"/>
</dbReference>
<dbReference type="SMR" id="B7UVA7"/>
<dbReference type="KEGG" id="pag:PLES_37131"/>
<dbReference type="HOGENOM" id="CLU_033449_0_2_6"/>
<dbReference type="UniPathway" id="UPA00940"/>
<dbReference type="GO" id="GO:0005829">
    <property type="term" value="C:cytosol"/>
    <property type="evidence" value="ECO:0007669"/>
    <property type="project" value="TreeGrafter"/>
</dbReference>
<dbReference type="GO" id="GO:0047952">
    <property type="term" value="F:glycerol-3-phosphate dehydrogenase [NAD(P)+] activity"/>
    <property type="evidence" value="ECO:0007669"/>
    <property type="project" value="UniProtKB-UniRule"/>
</dbReference>
<dbReference type="GO" id="GO:0051287">
    <property type="term" value="F:NAD binding"/>
    <property type="evidence" value="ECO:0007669"/>
    <property type="project" value="InterPro"/>
</dbReference>
<dbReference type="GO" id="GO:0005975">
    <property type="term" value="P:carbohydrate metabolic process"/>
    <property type="evidence" value="ECO:0007669"/>
    <property type="project" value="InterPro"/>
</dbReference>
<dbReference type="GO" id="GO:0046167">
    <property type="term" value="P:glycerol-3-phosphate biosynthetic process"/>
    <property type="evidence" value="ECO:0007669"/>
    <property type="project" value="UniProtKB-UniRule"/>
</dbReference>
<dbReference type="GO" id="GO:0046168">
    <property type="term" value="P:glycerol-3-phosphate catabolic process"/>
    <property type="evidence" value="ECO:0007669"/>
    <property type="project" value="InterPro"/>
</dbReference>
<dbReference type="GO" id="GO:0046474">
    <property type="term" value="P:glycerophospholipid biosynthetic process"/>
    <property type="evidence" value="ECO:0007669"/>
    <property type="project" value="TreeGrafter"/>
</dbReference>
<dbReference type="FunFam" id="1.10.1040.10:FF:000001">
    <property type="entry name" value="Glycerol-3-phosphate dehydrogenase [NAD(P)+]"/>
    <property type="match status" value="1"/>
</dbReference>
<dbReference type="FunFam" id="3.40.50.720:FF:000019">
    <property type="entry name" value="Glycerol-3-phosphate dehydrogenase [NAD(P)+]"/>
    <property type="match status" value="1"/>
</dbReference>
<dbReference type="Gene3D" id="1.10.1040.10">
    <property type="entry name" value="N-(1-d-carboxylethyl)-l-norvaline Dehydrogenase, domain 2"/>
    <property type="match status" value="1"/>
</dbReference>
<dbReference type="Gene3D" id="3.40.50.720">
    <property type="entry name" value="NAD(P)-binding Rossmann-like Domain"/>
    <property type="match status" value="1"/>
</dbReference>
<dbReference type="HAMAP" id="MF_00394">
    <property type="entry name" value="NAD_Glyc3P_dehydrog"/>
    <property type="match status" value="1"/>
</dbReference>
<dbReference type="InterPro" id="IPR008927">
    <property type="entry name" value="6-PGluconate_DH-like_C_sf"/>
</dbReference>
<dbReference type="InterPro" id="IPR013328">
    <property type="entry name" value="6PGD_dom2"/>
</dbReference>
<dbReference type="InterPro" id="IPR006168">
    <property type="entry name" value="G3P_DH_NAD-dep"/>
</dbReference>
<dbReference type="InterPro" id="IPR006109">
    <property type="entry name" value="G3P_DH_NAD-dep_C"/>
</dbReference>
<dbReference type="InterPro" id="IPR011128">
    <property type="entry name" value="G3P_DH_NAD-dep_N"/>
</dbReference>
<dbReference type="InterPro" id="IPR036291">
    <property type="entry name" value="NAD(P)-bd_dom_sf"/>
</dbReference>
<dbReference type="NCBIfam" id="NF000940">
    <property type="entry name" value="PRK00094.1-2"/>
    <property type="match status" value="1"/>
</dbReference>
<dbReference type="NCBIfam" id="NF000942">
    <property type="entry name" value="PRK00094.1-4"/>
    <property type="match status" value="1"/>
</dbReference>
<dbReference type="NCBIfam" id="NF000946">
    <property type="entry name" value="PRK00094.2-4"/>
    <property type="match status" value="1"/>
</dbReference>
<dbReference type="PANTHER" id="PTHR11728">
    <property type="entry name" value="GLYCEROL-3-PHOSPHATE DEHYDROGENASE"/>
    <property type="match status" value="1"/>
</dbReference>
<dbReference type="PANTHER" id="PTHR11728:SF1">
    <property type="entry name" value="GLYCEROL-3-PHOSPHATE DEHYDROGENASE [NAD(+)] 2, CHLOROPLASTIC"/>
    <property type="match status" value="1"/>
</dbReference>
<dbReference type="Pfam" id="PF07479">
    <property type="entry name" value="NAD_Gly3P_dh_C"/>
    <property type="match status" value="1"/>
</dbReference>
<dbReference type="Pfam" id="PF01210">
    <property type="entry name" value="NAD_Gly3P_dh_N"/>
    <property type="match status" value="1"/>
</dbReference>
<dbReference type="PIRSF" id="PIRSF000114">
    <property type="entry name" value="Glycerol-3-P_dh"/>
    <property type="match status" value="1"/>
</dbReference>
<dbReference type="PRINTS" id="PR00077">
    <property type="entry name" value="GPDHDRGNASE"/>
</dbReference>
<dbReference type="SUPFAM" id="SSF48179">
    <property type="entry name" value="6-phosphogluconate dehydrogenase C-terminal domain-like"/>
    <property type="match status" value="1"/>
</dbReference>
<dbReference type="SUPFAM" id="SSF51735">
    <property type="entry name" value="NAD(P)-binding Rossmann-fold domains"/>
    <property type="match status" value="1"/>
</dbReference>
<dbReference type="PROSITE" id="PS00957">
    <property type="entry name" value="NAD_G3PDH"/>
    <property type="match status" value="1"/>
</dbReference>
<comment type="function">
    <text evidence="1">Catalyzes the reduction of the glycolytic intermediate dihydroxyacetone phosphate (DHAP) to sn-glycerol 3-phosphate (G3P), the key precursor for phospholipid synthesis.</text>
</comment>
<comment type="catalytic activity">
    <reaction evidence="1">
        <text>sn-glycerol 3-phosphate + NAD(+) = dihydroxyacetone phosphate + NADH + H(+)</text>
        <dbReference type="Rhea" id="RHEA:11092"/>
        <dbReference type="ChEBI" id="CHEBI:15378"/>
        <dbReference type="ChEBI" id="CHEBI:57540"/>
        <dbReference type="ChEBI" id="CHEBI:57597"/>
        <dbReference type="ChEBI" id="CHEBI:57642"/>
        <dbReference type="ChEBI" id="CHEBI:57945"/>
        <dbReference type="EC" id="1.1.1.94"/>
    </reaction>
    <physiologicalReaction direction="right-to-left" evidence="1">
        <dbReference type="Rhea" id="RHEA:11094"/>
    </physiologicalReaction>
</comment>
<comment type="catalytic activity">
    <reaction evidence="1">
        <text>sn-glycerol 3-phosphate + NADP(+) = dihydroxyacetone phosphate + NADPH + H(+)</text>
        <dbReference type="Rhea" id="RHEA:11096"/>
        <dbReference type="ChEBI" id="CHEBI:15378"/>
        <dbReference type="ChEBI" id="CHEBI:57597"/>
        <dbReference type="ChEBI" id="CHEBI:57642"/>
        <dbReference type="ChEBI" id="CHEBI:57783"/>
        <dbReference type="ChEBI" id="CHEBI:58349"/>
        <dbReference type="EC" id="1.1.1.94"/>
    </reaction>
    <physiologicalReaction direction="right-to-left" evidence="1">
        <dbReference type="Rhea" id="RHEA:11098"/>
    </physiologicalReaction>
</comment>
<comment type="pathway">
    <text evidence="1">Membrane lipid metabolism; glycerophospholipid metabolism.</text>
</comment>
<comment type="subcellular location">
    <subcellularLocation>
        <location evidence="1">Cytoplasm</location>
    </subcellularLocation>
</comment>
<comment type="similarity">
    <text evidence="1">Belongs to the NAD-dependent glycerol-3-phosphate dehydrogenase family.</text>
</comment>
<name>GPDA_PSEA8</name>
<protein>
    <recommendedName>
        <fullName evidence="1">Glycerol-3-phosphate dehydrogenase [NAD(P)+]</fullName>
        <ecNumber evidence="1">1.1.1.94</ecNumber>
    </recommendedName>
    <alternativeName>
        <fullName evidence="1">NAD(P)(+)-dependent glycerol-3-phosphate dehydrogenase</fullName>
    </alternativeName>
    <alternativeName>
        <fullName evidence="1">NAD(P)H-dependent dihydroxyacetone-phosphate reductase</fullName>
    </alternativeName>
</protein>
<reference key="1">
    <citation type="journal article" date="2009" name="Genome Res.">
        <title>Newly introduced genomic prophage islands are critical determinants of in vivo competitiveness in the Liverpool epidemic strain of Pseudomonas aeruginosa.</title>
        <authorList>
            <person name="Winstanley C."/>
            <person name="Langille M.G.I."/>
            <person name="Fothergill J.L."/>
            <person name="Kukavica-Ibrulj I."/>
            <person name="Paradis-Bleau C."/>
            <person name="Sanschagrin F."/>
            <person name="Thomson N.R."/>
            <person name="Winsor G.L."/>
            <person name="Quail M.A."/>
            <person name="Lennard N."/>
            <person name="Bignell A."/>
            <person name="Clarke L."/>
            <person name="Seeger K."/>
            <person name="Saunders D."/>
            <person name="Harris D."/>
            <person name="Parkhill J."/>
            <person name="Hancock R.E.W."/>
            <person name="Brinkman F.S.L."/>
            <person name="Levesque R.C."/>
        </authorList>
    </citation>
    <scope>NUCLEOTIDE SEQUENCE [LARGE SCALE GENOMIC DNA]</scope>
    <source>
        <strain>LESB58</strain>
    </source>
</reference>
<organism>
    <name type="scientific">Pseudomonas aeruginosa (strain LESB58)</name>
    <dbReference type="NCBI Taxonomy" id="557722"/>
    <lineage>
        <taxon>Bacteria</taxon>
        <taxon>Pseudomonadati</taxon>
        <taxon>Pseudomonadota</taxon>
        <taxon>Gammaproteobacteria</taxon>
        <taxon>Pseudomonadales</taxon>
        <taxon>Pseudomonadaceae</taxon>
        <taxon>Pseudomonas</taxon>
    </lineage>
</organism>
<proteinExistence type="inferred from homology"/>
<accession>B7UVA7</accession>
<keyword id="KW-0963">Cytoplasm</keyword>
<keyword id="KW-0444">Lipid biosynthesis</keyword>
<keyword id="KW-0443">Lipid metabolism</keyword>
<keyword id="KW-0520">NAD</keyword>
<keyword id="KW-0521">NADP</keyword>
<keyword id="KW-0547">Nucleotide-binding</keyword>
<keyword id="KW-0560">Oxidoreductase</keyword>
<keyword id="KW-0594">Phospholipid biosynthesis</keyword>
<keyword id="KW-1208">Phospholipid metabolism</keyword>
<evidence type="ECO:0000255" key="1">
    <source>
        <dbReference type="HAMAP-Rule" id="MF_00394"/>
    </source>
</evidence>
<sequence length="340" mass="36788">MTEQQPIAVLGGGSFGTAIANLLAENGQAVRQWMRDPEQAEAIRTRRENPRYLKGVKVHPGVEPVTDLERTLADCQLIFVALPSSALRKVLQPHQAALTDKLLVSLTKGIEAHTFKLMSEILEEIAPQARIGVISGPNLAREIAEHELTATVVASEDDELCARVQAALHGRTFRVYASRDRFGVELGGALKNVYAIMAGLAAAMDMGENTRSMLITRALAEMTRFAVKLGANPMTFLGLAGVGDLIVTCSSPKSRNYQVGHALGEGLSLEEAVSRMGETAEGVNTLKVLKEKSDEMQVYMPLVAGLHAILFEGRTLAQVIQLLMRGEPKTDVDFIPTTGF</sequence>
<feature type="chain" id="PRO_1000123173" description="Glycerol-3-phosphate dehydrogenase [NAD(P)+]">
    <location>
        <begin position="1"/>
        <end position="340"/>
    </location>
</feature>
<feature type="active site" description="Proton acceptor" evidence="1">
    <location>
        <position position="191"/>
    </location>
</feature>
<feature type="binding site" evidence="1">
    <location>
        <position position="14"/>
    </location>
    <ligand>
        <name>NADPH</name>
        <dbReference type="ChEBI" id="CHEBI:57783"/>
    </ligand>
</feature>
<feature type="binding site" evidence="1">
    <location>
        <position position="15"/>
    </location>
    <ligand>
        <name>NADPH</name>
        <dbReference type="ChEBI" id="CHEBI:57783"/>
    </ligand>
</feature>
<feature type="binding site" evidence="1">
    <location>
        <position position="35"/>
    </location>
    <ligand>
        <name>NADPH</name>
        <dbReference type="ChEBI" id="CHEBI:57783"/>
    </ligand>
</feature>
<feature type="binding site" evidence="1">
    <location>
        <position position="108"/>
    </location>
    <ligand>
        <name>NADPH</name>
        <dbReference type="ChEBI" id="CHEBI:57783"/>
    </ligand>
</feature>
<feature type="binding site" evidence="1">
    <location>
        <position position="108"/>
    </location>
    <ligand>
        <name>sn-glycerol 3-phosphate</name>
        <dbReference type="ChEBI" id="CHEBI:57597"/>
    </ligand>
</feature>
<feature type="binding site" evidence="1">
    <location>
        <position position="136"/>
    </location>
    <ligand>
        <name>sn-glycerol 3-phosphate</name>
        <dbReference type="ChEBI" id="CHEBI:57597"/>
    </ligand>
</feature>
<feature type="binding site" evidence="1">
    <location>
        <position position="140"/>
    </location>
    <ligand>
        <name>NADPH</name>
        <dbReference type="ChEBI" id="CHEBI:57783"/>
    </ligand>
</feature>
<feature type="binding site" evidence="1">
    <location>
        <position position="191"/>
    </location>
    <ligand>
        <name>sn-glycerol 3-phosphate</name>
        <dbReference type="ChEBI" id="CHEBI:57597"/>
    </ligand>
</feature>
<feature type="binding site" evidence="1">
    <location>
        <position position="244"/>
    </location>
    <ligand>
        <name>sn-glycerol 3-phosphate</name>
        <dbReference type="ChEBI" id="CHEBI:57597"/>
    </ligand>
</feature>
<feature type="binding site" evidence="1">
    <location>
        <position position="254"/>
    </location>
    <ligand>
        <name>sn-glycerol 3-phosphate</name>
        <dbReference type="ChEBI" id="CHEBI:57597"/>
    </ligand>
</feature>
<feature type="binding site" evidence="1">
    <location>
        <position position="255"/>
    </location>
    <ligand>
        <name>NADPH</name>
        <dbReference type="ChEBI" id="CHEBI:57783"/>
    </ligand>
</feature>
<feature type="binding site" evidence="1">
    <location>
        <position position="255"/>
    </location>
    <ligand>
        <name>sn-glycerol 3-phosphate</name>
        <dbReference type="ChEBI" id="CHEBI:57597"/>
    </ligand>
</feature>
<feature type="binding site" evidence="1">
    <location>
        <position position="256"/>
    </location>
    <ligand>
        <name>sn-glycerol 3-phosphate</name>
        <dbReference type="ChEBI" id="CHEBI:57597"/>
    </ligand>
</feature>
<feature type="binding site" evidence="1">
    <location>
        <position position="281"/>
    </location>
    <ligand>
        <name>NADPH</name>
        <dbReference type="ChEBI" id="CHEBI:57783"/>
    </ligand>
</feature>